<protein>
    <recommendedName>
        <fullName evidence="1">Uracil-DNA glycosylase</fullName>
        <shortName evidence="1">UDG</shortName>
        <ecNumber evidence="1">3.2.2.27</ecNumber>
    </recommendedName>
</protein>
<reference key="1">
    <citation type="journal article" date="2008" name="J. Bacteriol.">
        <title>Genome sequence of Staphylococcus aureus strain Newman and comparative analysis of staphylococcal genomes: polymorphism and evolution of two major pathogenicity islands.</title>
        <authorList>
            <person name="Baba T."/>
            <person name="Bae T."/>
            <person name="Schneewind O."/>
            <person name="Takeuchi F."/>
            <person name="Hiramatsu K."/>
        </authorList>
    </citation>
    <scope>NUCLEOTIDE SEQUENCE [LARGE SCALE GENOMIC DNA]</scope>
    <source>
        <strain>Newman</strain>
    </source>
</reference>
<organism>
    <name type="scientific">Staphylococcus aureus (strain Newman)</name>
    <dbReference type="NCBI Taxonomy" id="426430"/>
    <lineage>
        <taxon>Bacteria</taxon>
        <taxon>Bacillati</taxon>
        <taxon>Bacillota</taxon>
        <taxon>Bacilli</taxon>
        <taxon>Bacillales</taxon>
        <taxon>Staphylococcaceae</taxon>
        <taxon>Staphylococcus</taxon>
    </lineage>
</organism>
<accession>A6QEN4</accession>
<dbReference type="EC" id="3.2.2.27" evidence="1"/>
<dbReference type="EMBL" id="AP009351">
    <property type="protein sequence ID" value="BAF66816.1"/>
    <property type="molecule type" value="Genomic_DNA"/>
</dbReference>
<dbReference type="RefSeq" id="WP_000455256.1">
    <property type="nucleotide sequence ID" value="NZ_JBBIAE010000002.1"/>
</dbReference>
<dbReference type="SMR" id="A6QEN4"/>
<dbReference type="KEGG" id="sae:NWMN_0544"/>
<dbReference type="HOGENOM" id="CLU_032162_3_1_9"/>
<dbReference type="Proteomes" id="UP000006386">
    <property type="component" value="Chromosome"/>
</dbReference>
<dbReference type="GO" id="GO:0005737">
    <property type="term" value="C:cytoplasm"/>
    <property type="evidence" value="ECO:0007669"/>
    <property type="project" value="UniProtKB-SubCell"/>
</dbReference>
<dbReference type="GO" id="GO:0004844">
    <property type="term" value="F:uracil DNA N-glycosylase activity"/>
    <property type="evidence" value="ECO:0007669"/>
    <property type="project" value="UniProtKB-UniRule"/>
</dbReference>
<dbReference type="GO" id="GO:0097510">
    <property type="term" value="P:base-excision repair, AP site formation via deaminated base removal"/>
    <property type="evidence" value="ECO:0007669"/>
    <property type="project" value="TreeGrafter"/>
</dbReference>
<dbReference type="CDD" id="cd10027">
    <property type="entry name" value="UDG-F1-like"/>
    <property type="match status" value="1"/>
</dbReference>
<dbReference type="FunFam" id="3.40.470.10:FF:000001">
    <property type="entry name" value="Uracil-DNA glycosylase"/>
    <property type="match status" value="1"/>
</dbReference>
<dbReference type="Gene3D" id="3.40.470.10">
    <property type="entry name" value="Uracil-DNA glycosylase-like domain"/>
    <property type="match status" value="1"/>
</dbReference>
<dbReference type="HAMAP" id="MF_00148">
    <property type="entry name" value="UDG"/>
    <property type="match status" value="1"/>
</dbReference>
<dbReference type="InterPro" id="IPR002043">
    <property type="entry name" value="UDG_fam1"/>
</dbReference>
<dbReference type="InterPro" id="IPR018085">
    <property type="entry name" value="Ura-DNA_Glyclase_AS"/>
</dbReference>
<dbReference type="InterPro" id="IPR005122">
    <property type="entry name" value="Uracil-DNA_glycosylase-like"/>
</dbReference>
<dbReference type="InterPro" id="IPR036895">
    <property type="entry name" value="Uracil-DNA_glycosylase-like_sf"/>
</dbReference>
<dbReference type="NCBIfam" id="NF003588">
    <property type="entry name" value="PRK05254.1-1"/>
    <property type="match status" value="1"/>
</dbReference>
<dbReference type="NCBIfam" id="NF003589">
    <property type="entry name" value="PRK05254.1-2"/>
    <property type="match status" value="1"/>
</dbReference>
<dbReference type="NCBIfam" id="NF003591">
    <property type="entry name" value="PRK05254.1-4"/>
    <property type="match status" value="1"/>
</dbReference>
<dbReference type="NCBIfam" id="NF003592">
    <property type="entry name" value="PRK05254.1-5"/>
    <property type="match status" value="1"/>
</dbReference>
<dbReference type="NCBIfam" id="TIGR00628">
    <property type="entry name" value="ung"/>
    <property type="match status" value="1"/>
</dbReference>
<dbReference type="PANTHER" id="PTHR11264">
    <property type="entry name" value="URACIL-DNA GLYCOSYLASE"/>
    <property type="match status" value="1"/>
</dbReference>
<dbReference type="PANTHER" id="PTHR11264:SF0">
    <property type="entry name" value="URACIL-DNA GLYCOSYLASE"/>
    <property type="match status" value="1"/>
</dbReference>
<dbReference type="Pfam" id="PF03167">
    <property type="entry name" value="UDG"/>
    <property type="match status" value="1"/>
</dbReference>
<dbReference type="SMART" id="SM00986">
    <property type="entry name" value="UDG"/>
    <property type="match status" value="1"/>
</dbReference>
<dbReference type="SMART" id="SM00987">
    <property type="entry name" value="UreE_C"/>
    <property type="match status" value="1"/>
</dbReference>
<dbReference type="SUPFAM" id="SSF52141">
    <property type="entry name" value="Uracil-DNA glycosylase-like"/>
    <property type="match status" value="1"/>
</dbReference>
<dbReference type="PROSITE" id="PS00130">
    <property type="entry name" value="U_DNA_GLYCOSYLASE"/>
    <property type="match status" value="1"/>
</dbReference>
<gene>
    <name evidence="1" type="primary">ung</name>
    <name type="ordered locus">NWMN_0544</name>
</gene>
<sequence>MEWSQIFHDITTKHDFKAMHDFLEKEYSTAIVYPDRENIYQAFDLTPFENIKVVILGQDPYHGPNQAHGLAFSVQPNAKFPPSLRNMYKELADDIGCVRQTPHLQDWAREGVLLLNTVLTVRQGEANSHRDIGWETFTDEIIKAVSDYKEHVVFILWGKPAQQKIKLIDTSKHCIIKSVHPSPLSAYRGFFGSKPYSKANAYLESVGKSPINWCESEA</sequence>
<name>UNG_STAAE</name>
<keyword id="KW-0963">Cytoplasm</keyword>
<keyword id="KW-0227">DNA damage</keyword>
<keyword id="KW-0234">DNA repair</keyword>
<keyword id="KW-0378">Hydrolase</keyword>
<evidence type="ECO:0000255" key="1">
    <source>
        <dbReference type="HAMAP-Rule" id="MF_00148"/>
    </source>
</evidence>
<feature type="chain" id="PRO_1000071500" description="Uracil-DNA glycosylase">
    <location>
        <begin position="1"/>
        <end position="218"/>
    </location>
</feature>
<feature type="active site" description="Proton acceptor" evidence="1">
    <location>
        <position position="59"/>
    </location>
</feature>
<comment type="function">
    <text evidence="1">Excises uracil residues from the DNA which can arise as a result of misincorporation of dUMP residues by DNA polymerase or due to deamination of cytosine.</text>
</comment>
<comment type="catalytic activity">
    <reaction evidence="1">
        <text>Hydrolyzes single-stranded DNA or mismatched double-stranded DNA and polynucleotides, releasing free uracil.</text>
        <dbReference type="EC" id="3.2.2.27"/>
    </reaction>
</comment>
<comment type="subcellular location">
    <subcellularLocation>
        <location evidence="1">Cytoplasm</location>
    </subcellularLocation>
</comment>
<comment type="similarity">
    <text evidence="1">Belongs to the uracil-DNA glycosylase (UDG) superfamily. UNG family.</text>
</comment>
<proteinExistence type="inferred from homology"/>